<sequence>MSGSSAAPGPGSGSSPAACRFAHYFVLCGIDADSGLEPDELAGENFDQSPLRRTFKSKVLAHYPQNIEWNPFDQDAVNMLCMPKGLSFRTQADNKEPQFHSFIITREDGSRTYGFVLTFYEEVTSKQICTAMQTLYQMHNAEQYSSVYASSSCSMDSLASSIDEGDATSLLKLQRYNSYDINRDTLYVSKSICLITPLPFMQACKKFLFQLHKAVTSQQPPPLPLESYIHNILYEVPLPPPGRSLKFYGVYEPVICQRPGPNELPLSDYPLREACELLGLENLVQVFTCVLLEMQTLLYSQDYQRLMTVAEGITTLLFPFQWQHVYVPILPASLLHFLDAPVPYLMGLQSKEGTDRSKLELPQEANLCFVDIDNHFIELPEEFPQFPNKVDFIQELSEVLLQFGIPPEGSLHSSESATKLKNMVLKDLANDKKNGNVPNNSVSVYELLKGSETIARLQALAKRTGVTMEKIDLPASLSEKEKDLKLQCEEADLRDSQLNVQLREVFANRFTQMFADYEAFVIQTAQDMESWLTNREQMQNFDKASFLSDQPEPYLPFLSRFIETQMFATFIDNKIMSQWEEKDPLLRVFDSRIEKIRLYNVRAPTLRTSIYQKCSSLKEAAQSIEQRLMKMDHTAIHPHLLDMKIGQGKYEQGFFPKLQSDVLATGPANNNRWVSRSATAQRRKERLRQSSEHIGLDSDLREKYMQEARSLGKNLRQPKLSDLSPAVIAQTNWKFVEGLLKECRMKTKRMLVEKMGHEAVELGHGEANITGLEENTLIASLCDLLERIWSHGLLVKQGKSALWSHLLQFQDREEKQEHLTDSPVALGPERRKSDSGVMLPTLRVSLIQDMRHIQNMTEIKTDVGRARAWIRLSLEKKLLSQHLKQLLSNQPLTKKLYKRYAFLRCEEEREQFLYHLLSLNAVDYFCFTSVFTTIMIPYRSVIIPIKKLSNAIITSNPWICVSGELGDTGVMQIPKNLLEMTFECQNLGKLTTVQIGHDNSGLLAKWLVDCVMVRNEITGHTYRFPCGRWLGKGVDDGSLERILIGELMTSASDEDLGKQCRTPPQQKSPTTTRRLSITSLTGKPAKPNAGQIQEGIGEAVNNIVKHFHKPEKERGSLTVLLCGENGLVAALEQVFHHGFKSARIFHKNVFIWDFVEKAVAYFETTDQILDNEGDVLIQKPSSKTFCHYVNAINTAPRNIGKDGKFQILVCLGTRDHLLPQWIPLLAECPAITRMYEENALLRDHMTVNSLIRILQTIQDFTIVLEGSLIKGVDV</sequence>
<keyword id="KW-0007">Acetylation</keyword>
<keyword id="KW-0344">Guanine-nucleotide releasing factor</keyword>
<keyword id="KW-0472">Membrane</keyword>
<keyword id="KW-0597">Phosphoprotein</keyword>
<keyword id="KW-1185">Reference proteome</keyword>
<keyword id="KW-0677">Repeat</keyword>
<keyword id="KW-0812">Transmembrane</keyword>
<keyword id="KW-1133">Transmembrane helix</keyword>
<feature type="initiator methionine" description="Removed" evidence="4">
    <location>
        <position position="1"/>
    </location>
</feature>
<feature type="chain" id="PRO_0000326532" description="DENN domain-containing protein 5B">
    <location>
        <begin position="2"/>
        <end position="1274"/>
    </location>
</feature>
<feature type="transmembrane region" description="Helical" evidence="5">
    <location>
        <begin position="916"/>
        <end position="936"/>
    </location>
</feature>
<feature type="domain" description="uDENN" evidence="8">
    <location>
        <begin position="39"/>
        <end position="244"/>
    </location>
</feature>
<feature type="domain" description="cDENN" evidence="8">
    <location>
        <begin position="263"/>
        <end position="399"/>
    </location>
</feature>
<feature type="domain" description="dDENN" evidence="8">
    <location>
        <begin position="401"/>
        <end position="581"/>
    </location>
</feature>
<feature type="domain" description="RUN 1" evidence="7">
    <location>
        <begin position="772"/>
        <end position="932"/>
    </location>
</feature>
<feature type="domain" description="PLAT" evidence="6">
    <location>
        <begin position="936"/>
        <end position="1044"/>
    </location>
</feature>
<feature type="domain" description="RUN 2" evidence="7">
    <location>
        <begin position="1118"/>
        <end position="1267"/>
    </location>
</feature>
<feature type="modified residue" description="N-acetylserine" evidence="4">
    <location>
        <position position="2"/>
    </location>
</feature>
<feature type="modified residue" description="Phosphoserine" evidence="11">
    <location>
        <position position="49"/>
    </location>
</feature>
<feature type="modified residue" description="Phosphoserine" evidence="10 11">
    <location>
        <position position="178"/>
    </location>
</feature>
<feature type="modified residue" description="Phosphoserine" evidence="4">
    <location>
        <position position="822"/>
    </location>
</feature>
<feature type="modified residue" description="Phosphothreonine" evidence="3">
    <location>
        <position position="1062"/>
    </location>
</feature>
<feature type="modified residue" description="Phosphoserine" evidence="3">
    <location>
        <position position="1068"/>
    </location>
</feature>
<feature type="modified residue" description="Phosphoserine" evidence="4">
    <location>
        <position position="1076"/>
    </location>
</feature>
<feature type="modified residue" description="Phosphoserine" evidence="2">
    <location>
        <position position="1079"/>
    </location>
</feature>
<feature type="sequence conflict" description="In Ref. 2; BAC34394." evidence="9" ref="2">
    <original>E</original>
    <variation>G</variation>
    <location>
        <position position="37"/>
    </location>
</feature>
<feature type="sequence conflict" description="In Ref. 2; BAC34923." evidence="9" ref="2">
    <original>P</original>
    <variation>R</variation>
    <location>
        <position position="83"/>
    </location>
</feature>
<feature type="sequence conflict" description="In Ref. 2; BAC34923." evidence="9" ref="2">
    <original>C</original>
    <variation>S</variation>
    <location>
        <position position="153"/>
    </location>
</feature>
<feature type="sequence conflict" description="In Ref. 2; BAC34923." evidence="9" ref="2">
    <original>P</original>
    <variation>Q</variation>
    <location>
        <position position="221"/>
    </location>
</feature>
<feature type="sequence conflict" description="In Ref. 2; BAC34394." evidence="9" ref="2">
    <original>L</original>
    <variation>H</variation>
    <location>
        <position position="225"/>
    </location>
</feature>
<protein>
    <recommendedName>
        <fullName>DENN domain-containing protein 5B</fullName>
    </recommendedName>
    <alternativeName>
        <fullName>Rab6IP1-like protein</fullName>
    </alternativeName>
</protein>
<comment type="function">
    <text evidence="1">Guanine nucleotide exchange factor (GEF) which may activate RAB39A and/or RAB39B. Promotes the exchange of GDP to GTP, converting inactive GDP-bound Rab proteins into their active GTP-bound form (By similarity).</text>
</comment>
<comment type="subcellular location">
    <subcellularLocation>
        <location evidence="9">Membrane</location>
        <topology evidence="9">Single-pass membrane protein</topology>
    </subcellularLocation>
</comment>
<comment type="similarity">
    <text evidence="9">Belongs to the RAB6IP1 family.</text>
</comment>
<comment type="sequence caution" evidence="9">
    <conflict type="miscellaneous discrepancy">
        <sequence resource="EMBL-CDS" id="AAI32200"/>
    </conflict>
    <text>Probable cloning artifact.</text>
</comment>
<comment type="sequence caution" evidence="9">
    <conflict type="miscellaneous discrepancy">
        <sequence resource="EMBL-CDS" id="AAI32536"/>
    </conflict>
    <text>Probable cloning artifact.</text>
</comment>
<comment type="sequence caution" evidence="9">
    <conflict type="miscellaneous discrepancy">
        <sequence resource="EMBL-CDS" id="BAC34394"/>
    </conflict>
    <text>Probable cloning artifact.</text>
</comment>
<reference key="1">
    <citation type="journal article" date="2009" name="PLoS Biol.">
        <title>Lineage-specific biology revealed by a finished genome assembly of the mouse.</title>
        <authorList>
            <person name="Church D.M."/>
            <person name="Goodstadt L."/>
            <person name="Hillier L.W."/>
            <person name="Zody M.C."/>
            <person name="Goldstein S."/>
            <person name="She X."/>
            <person name="Bult C.J."/>
            <person name="Agarwala R."/>
            <person name="Cherry J.L."/>
            <person name="DiCuccio M."/>
            <person name="Hlavina W."/>
            <person name="Kapustin Y."/>
            <person name="Meric P."/>
            <person name="Maglott D."/>
            <person name="Birtle Z."/>
            <person name="Marques A.C."/>
            <person name="Graves T."/>
            <person name="Zhou S."/>
            <person name="Teague B."/>
            <person name="Potamousis K."/>
            <person name="Churas C."/>
            <person name="Place M."/>
            <person name="Herschleb J."/>
            <person name="Runnheim R."/>
            <person name="Forrest D."/>
            <person name="Amos-Landgraf J."/>
            <person name="Schwartz D.C."/>
            <person name="Cheng Z."/>
            <person name="Lindblad-Toh K."/>
            <person name="Eichler E.E."/>
            <person name="Ponting C.P."/>
        </authorList>
    </citation>
    <scope>NUCLEOTIDE SEQUENCE [LARGE SCALE GENOMIC DNA]</scope>
    <source>
        <strain>C57BL/6J</strain>
    </source>
</reference>
<reference key="2">
    <citation type="journal article" date="2005" name="Science">
        <title>The transcriptional landscape of the mammalian genome.</title>
        <authorList>
            <person name="Carninci P."/>
            <person name="Kasukawa T."/>
            <person name="Katayama S."/>
            <person name="Gough J."/>
            <person name="Frith M.C."/>
            <person name="Maeda N."/>
            <person name="Oyama R."/>
            <person name="Ravasi T."/>
            <person name="Lenhard B."/>
            <person name="Wells C."/>
            <person name="Kodzius R."/>
            <person name="Shimokawa K."/>
            <person name="Bajic V.B."/>
            <person name="Brenner S.E."/>
            <person name="Batalov S."/>
            <person name="Forrest A.R."/>
            <person name="Zavolan M."/>
            <person name="Davis M.J."/>
            <person name="Wilming L.G."/>
            <person name="Aidinis V."/>
            <person name="Allen J.E."/>
            <person name="Ambesi-Impiombato A."/>
            <person name="Apweiler R."/>
            <person name="Aturaliya R.N."/>
            <person name="Bailey T.L."/>
            <person name="Bansal M."/>
            <person name="Baxter L."/>
            <person name="Beisel K.W."/>
            <person name="Bersano T."/>
            <person name="Bono H."/>
            <person name="Chalk A.M."/>
            <person name="Chiu K.P."/>
            <person name="Choudhary V."/>
            <person name="Christoffels A."/>
            <person name="Clutterbuck D.R."/>
            <person name="Crowe M.L."/>
            <person name="Dalla E."/>
            <person name="Dalrymple B.P."/>
            <person name="de Bono B."/>
            <person name="Della Gatta G."/>
            <person name="di Bernardo D."/>
            <person name="Down T."/>
            <person name="Engstrom P."/>
            <person name="Fagiolini M."/>
            <person name="Faulkner G."/>
            <person name="Fletcher C.F."/>
            <person name="Fukushima T."/>
            <person name="Furuno M."/>
            <person name="Futaki S."/>
            <person name="Gariboldi M."/>
            <person name="Georgii-Hemming P."/>
            <person name="Gingeras T.R."/>
            <person name="Gojobori T."/>
            <person name="Green R.E."/>
            <person name="Gustincich S."/>
            <person name="Harbers M."/>
            <person name="Hayashi Y."/>
            <person name="Hensch T.K."/>
            <person name="Hirokawa N."/>
            <person name="Hill D."/>
            <person name="Huminiecki L."/>
            <person name="Iacono M."/>
            <person name="Ikeo K."/>
            <person name="Iwama A."/>
            <person name="Ishikawa T."/>
            <person name="Jakt M."/>
            <person name="Kanapin A."/>
            <person name="Katoh M."/>
            <person name="Kawasawa Y."/>
            <person name="Kelso J."/>
            <person name="Kitamura H."/>
            <person name="Kitano H."/>
            <person name="Kollias G."/>
            <person name="Krishnan S.P."/>
            <person name="Kruger A."/>
            <person name="Kummerfeld S.K."/>
            <person name="Kurochkin I.V."/>
            <person name="Lareau L.F."/>
            <person name="Lazarevic D."/>
            <person name="Lipovich L."/>
            <person name="Liu J."/>
            <person name="Liuni S."/>
            <person name="McWilliam S."/>
            <person name="Madan Babu M."/>
            <person name="Madera M."/>
            <person name="Marchionni L."/>
            <person name="Matsuda H."/>
            <person name="Matsuzawa S."/>
            <person name="Miki H."/>
            <person name="Mignone F."/>
            <person name="Miyake S."/>
            <person name="Morris K."/>
            <person name="Mottagui-Tabar S."/>
            <person name="Mulder N."/>
            <person name="Nakano N."/>
            <person name="Nakauchi H."/>
            <person name="Ng P."/>
            <person name="Nilsson R."/>
            <person name="Nishiguchi S."/>
            <person name="Nishikawa S."/>
            <person name="Nori F."/>
            <person name="Ohara O."/>
            <person name="Okazaki Y."/>
            <person name="Orlando V."/>
            <person name="Pang K.C."/>
            <person name="Pavan W.J."/>
            <person name="Pavesi G."/>
            <person name="Pesole G."/>
            <person name="Petrovsky N."/>
            <person name="Piazza S."/>
            <person name="Reed J."/>
            <person name="Reid J.F."/>
            <person name="Ring B.Z."/>
            <person name="Ringwald M."/>
            <person name="Rost B."/>
            <person name="Ruan Y."/>
            <person name="Salzberg S.L."/>
            <person name="Sandelin A."/>
            <person name="Schneider C."/>
            <person name="Schoenbach C."/>
            <person name="Sekiguchi K."/>
            <person name="Semple C.A."/>
            <person name="Seno S."/>
            <person name="Sessa L."/>
            <person name="Sheng Y."/>
            <person name="Shibata Y."/>
            <person name="Shimada H."/>
            <person name="Shimada K."/>
            <person name="Silva D."/>
            <person name="Sinclair B."/>
            <person name="Sperling S."/>
            <person name="Stupka E."/>
            <person name="Sugiura K."/>
            <person name="Sultana R."/>
            <person name="Takenaka Y."/>
            <person name="Taki K."/>
            <person name="Tammoja K."/>
            <person name="Tan S.L."/>
            <person name="Tang S."/>
            <person name="Taylor M.S."/>
            <person name="Tegner J."/>
            <person name="Teichmann S.A."/>
            <person name="Ueda H.R."/>
            <person name="van Nimwegen E."/>
            <person name="Verardo R."/>
            <person name="Wei C.L."/>
            <person name="Yagi K."/>
            <person name="Yamanishi H."/>
            <person name="Zabarovsky E."/>
            <person name="Zhu S."/>
            <person name="Zimmer A."/>
            <person name="Hide W."/>
            <person name="Bult C."/>
            <person name="Grimmond S.M."/>
            <person name="Teasdale R.D."/>
            <person name="Liu E.T."/>
            <person name="Brusic V."/>
            <person name="Quackenbush J."/>
            <person name="Wahlestedt C."/>
            <person name="Mattick J.S."/>
            <person name="Hume D.A."/>
            <person name="Kai C."/>
            <person name="Sasaki D."/>
            <person name="Tomaru Y."/>
            <person name="Fukuda S."/>
            <person name="Kanamori-Katayama M."/>
            <person name="Suzuki M."/>
            <person name="Aoki J."/>
            <person name="Arakawa T."/>
            <person name="Iida J."/>
            <person name="Imamura K."/>
            <person name="Itoh M."/>
            <person name="Kato T."/>
            <person name="Kawaji H."/>
            <person name="Kawagashira N."/>
            <person name="Kawashima T."/>
            <person name="Kojima M."/>
            <person name="Kondo S."/>
            <person name="Konno H."/>
            <person name="Nakano K."/>
            <person name="Ninomiya N."/>
            <person name="Nishio T."/>
            <person name="Okada M."/>
            <person name="Plessy C."/>
            <person name="Shibata K."/>
            <person name="Shiraki T."/>
            <person name="Suzuki S."/>
            <person name="Tagami M."/>
            <person name="Waki K."/>
            <person name="Watahiki A."/>
            <person name="Okamura-Oho Y."/>
            <person name="Suzuki H."/>
            <person name="Kawai J."/>
            <person name="Hayashizaki Y."/>
        </authorList>
    </citation>
    <scope>NUCLEOTIDE SEQUENCE [LARGE SCALE MRNA] OF 1-934</scope>
    <source>
        <strain>C57BL/6J</strain>
        <tissue>Heart</tissue>
    </source>
</reference>
<reference key="3">
    <citation type="journal article" date="2004" name="Genome Res.">
        <title>The status, quality, and expansion of the NIH full-length cDNA project: the Mammalian Gene Collection (MGC).</title>
        <authorList>
            <consortium name="The MGC Project Team"/>
        </authorList>
    </citation>
    <scope>NUCLEOTIDE SEQUENCE [LARGE SCALE MRNA] OF 1-934</scope>
    <source>
        <tissue>Brain</tissue>
    </source>
</reference>
<reference key="4">
    <citation type="journal article" date="2007" name="Proc. Natl. Acad. Sci. U.S.A.">
        <title>Large-scale phosphorylation analysis of mouse liver.</title>
        <authorList>
            <person name="Villen J."/>
            <person name="Beausoleil S.A."/>
            <person name="Gerber S.A."/>
            <person name="Gygi S.P."/>
        </authorList>
    </citation>
    <scope>PHOSPHORYLATION [LARGE SCALE ANALYSIS] AT SER-178</scope>
    <scope>IDENTIFICATION BY MASS SPECTROMETRY [LARGE SCALE ANALYSIS]</scope>
    <source>
        <tissue>Liver</tissue>
    </source>
</reference>
<reference key="5">
    <citation type="journal article" date="2010" name="Cell">
        <title>A tissue-specific atlas of mouse protein phosphorylation and expression.</title>
        <authorList>
            <person name="Huttlin E.L."/>
            <person name="Jedrychowski M.P."/>
            <person name="Elias J.E."/>
            <person name="Goswami T."/>
            <person name="Rad R."/>
            <person name="Beausoleil S.A."/>
            <person name="Villen J."/>
            <person name="Haas W."/>
            <person name="Sowa M.E."/>
            <person name="Gygi S.P."/>
        </authorList>
    </citation>
    <scope>PHOSPHORYLATION [LARGE SCALE ANALYSIS] AT SER-49 AND SER-178</scope>
    <scope>IDENTIFICATION BY MASS SPECTROMETRY [LARGE SCALE ANALYSIS]</scope>
    <source>
        <tissue>Brain</tissue>
        <tissue>Brown adipose tissue</tissue>
        <tissue>Heart</tissue>
        <tissue>Liver</tissue>
        <tissue>Testis</tissue>
    </source>
</reference>
<accession>A2RSQ0</accession>
<accession>Q8BII7</accession>
<accession>Q8BWK2</accession>
<gene>
    <name type="primary">Dennd5b</name>
</gene>
<name>DEN5B_MOUSE</name>
<proteinExistence type="evidence at protein level"/>
<organism>
    <name type="scientific">Mus musculus</name>
    <name type="common">Mouse</name>
    <dbReference type="NCBI Taxonomy" id="10090"/>
    <lineage>
        <taxon>Eukaryota</taxon>
        <taxon>Metazoa</taxon>
        <taxon>Chordata</taxon>
        <taxon>Craniata</taxon>
        <taxon>Vertebrata</taxon>
        <taxon>Euteleostomi</taxon>
        <taxon>Mammalia</taxon>
        <taxon>Eutheria</taxon>
        <taxon>Euarchontoglires</taxon>
        <taxon>Glires</taxon>
        <taxon>Rodentia</taxon>
        <taxon>Myomorpha</taxon>
        <taxon>Muroidea</taxon>
        <taxon>Muridae</taxon>
        <taxon>Murinae</taxon>
        <taxon>Mus</taxon>
        <taxon>Mus</taxon>
    </lineage>
</organism>
<evidence type="ECO:0000250" key="1"/>
<evidence type="ECO:0000250" key="2">
    <source>
        <dbReference type="UniProtKB" id="Q6IQ26"/>
    </source>
</evidence>
<evidence type="ECO:0000250" key="3">
    <source>
        <dbReference type="UniProtKB" id="Q6PAL8"/>
    </source>
</evidence>
<evidence type="ECO:0000250" key="4">
    <source>
        <dbReference type="UniProtKB" id="Q6ZUT9"/>
    </source>
</evidence>
<evidence type="ECO:0000255" key="5"/>
<evidence type="ECO:0000255" key="6">
    <source>
        <dbReference type="PROSITE-ProRule" id="PRU00152"/>
    </source>
</evidence>
<evidence type="ECO:0000255" key="7">
    <source>
        <dbReference type="PROSITE-ProRule" id="PRU00178"/>
    </source>
</evidence>
<evidence type="ECO:0000255" key="8">
    <source>
        <dbReference type="PROSITE-ProRule" id="PRU00304"/>
    </source>
</evidence>
<evidence type="ECO:0000305" key="9"/>
<evidence type="ECO:0007744" key="10">
    <source>
    </source>
</evidence>
<evidence type="ECO:0007744" key="11">
    <source>
    </source>
</evidence>
<dbReference type="EMBL" id="AC132412">
    <property type="status" value="NOT_ANNOTATED_CDS"/>
    <property type="molecule type" value="Genomic_DNA"/>
</dbReference>
<dbReference type="EMBL" id="AC140327">
    <property type="status" value="NOT_ANNOTATED_CDS"/>
    <property type="molecule type" value="Genomic_DNA"/>
</dbReference>
<dbReference type="EMBL" id="AK050728">
    <property type="protein sequence ID" value="BAC34394.1"/>
    <property type="status" value="ALT_SEQ"/>
    <property type="molecule type" value="mRNA"/>
</dbReference>
<dbReference type="EMBL" id="AK052296">
    <property type="protein sequence ID" value="BAC34923.1"/>
    <property type="molecule type" value="mRNA"/>
</dbReference>
<dbReference type="EMBL" id="BC132199">
    <property type="protein sequence ID" value="AAI32200.1"/>
    <property type="status" value="ALT_SEQ"/>
    <property type="molecule type" value="mRNA"/>
</dbReference>
<dbReference type="EMBL" id="BC132535">
    <property type="protein sequence ID" value="AAI32536.1"/>
    <property type="status" value="ALT_SEQ"/>
    <property type="molecule type" value="mRNA"/>
</dbReference>
<dbReference type="CCDS" id="CCDS20714.2"/>
<dbReference type="RefSeq" id="NP_796166.2">
    <property type="nucleotide sequence ID" value="NM_177192.3"/>
</dbReference>
<dbReference type="SMR" id="A2RSQ0"/>
<dbReference type="BioGRID" id="236116">
    <property type="interactions" value="7"/>
</dbReference>
<dbReference type="FunCoup" id="A2RSQ0">
    <property type="interactions" value="1817"/>
</dbReference>
<dbReference type="STRING" id="10090.ENSMUSP00000107182"/>
<dbReference type="iPTMnet" id="A2RSQ0"/>
<dbReference type="PhosphoSitePlus" id="A2RSQ0"/>
<dbReference type="PaxDb" id="10090-ENSMUSP00000107182"/>
<dbReference type="PeptideAtlas" id="A2RSQ0"/>
<dbReference type="ProteomicsDB" id="279622"/>
<dbReference type="Antibodypedia" id="55109">
    <property type="antibodies" value="68 antibodies from 14 providers"/>
</dbReference>
<dbReference type="DNASU" id="320560"/>
<dbReference type="Ensembl" id="ENSMUST00000111557.8">
    <property type="protein sequence ID" value="ENSMUSP00000107182.2"/>
    <property type="gene ID" value="ENSMUSG00000030313.16"/>
</dbReference>
<dbReference type="GeneID" id="320560"/>
<dbReference type="KEGG" id="mmu:320560"/>
<dbReference type="UCSC" id="uc009ett.1">
    <property type="organism name" value="mouse"/>
</dbReference>
<dbReference type="AGR" id="MGI:2444273"/>
<dbReference type="CTD" id="160518"/>
<dbReference type="MGI" id="MGI:2444273">
    <property type="gene designation" value="Dennd5b"/>
</dbReference>
<dbReference type="VEuPathDB" id="HostDB:ENSMUSG00000030313"/>
<dbReference type="eggNOG" id="KOG2080">
    <property type="taxonomic scope" value="Eukaryota"/>
</dbReference>
<dbReference type="GeneTree" id="ENSGT00940000153678"/>
<dbReference type="HOGENOM" id="CLU_004201_2_0_1"/>
<dbReference type="InParanoid" id="A2RSQ0"/>
<dbReference type="OMA" id="LYQMHHA"/>
<dbReference type="OrthoDB" id="6019893at2759"/>
<dbReference type="PhylomeDB" id="A2RSQ0"/>
<dbReference type="TreeFam" id="TF313237"/>
<dbReference type="Reactome" id="R-MMU-8876198">
    <property type="pathway name" value="RAB GEFs exchange GTP for GDP on RABs"/>
</dbReference>
<dbReference type="BioGRID-ORCS" id="320560">
    <property type="hits" value="2 hits in 77 CRISPR screens"/>
</dbReference>
<dbReference type="ChiTaRS" id="Dennd5b">
    <property type="organism name" value="mouse"/>
</dbReference>
<dbReference type="PRO" id="PR:A2RSQ0"/>
<dbReference type="Proteomes" id="UP000000589">
    <property type="component" value="Chromosome 6"/>
</dbReference>
<dbReference type="RNAct" id="A2RSQ0">
    <property type="molecule type" value="protein"/>
</dbReference>
<dbReference type="Bgee" id="ENSMUSG00000030313">
    <property type="expression patterns" value="Expressed in retrosplenial region and 224 other cell types or tissues"/>
</dbReference>
<dbReference type="ExpressionAtlas" id="A2RSQ0">
    <property type="expression patterns" value="baseline and differential"/>
</dbReference>
<dbReference type="GO" id="GO:0016020">
    <property type="term" value="C:membrane"/>
    <property type="evidence" value="ECO:0007669"/>
    <property type="project" value="UniProtKB-SubCell"/>
</dbReference>
<dbReference type="GO" id="GO:0005085">
    <property type="term" value="F:guanyl-nucleotide exchange factor activity"/>
    <property type="evidence" value="ECO:0000250"/>
    <property type="project" value="UniProtKB"/>
</dbReference>
<dbReference type="GO" id="GO:0031267">
    <property type="term" value="F:small GTPase binding"/>
    <property type="evidence" value="ECO:0007669"/>
    <property type="project" value="InterPro"/>
</dbReference>
<dbReference type="GO" id="GO:1905885">
    <property type="term" value="P:positive regulation of triglyceride transport"/>
    <property type="evidence" value="ECO:0000314"/>
    <property type="project" value="CACAO"/>
</dbReference>
<dbReference type="CDD" id="cd01757">
    <property type="entry name" value="PLAT_RAB6IP1"/>
    <property type="match status" value="1"/>
</dbReference>
<dbReference type="CDD" id="cd17691">
    <property type="entry name" value="RUN1_DENND5B"/>
    <property type="match status" value="1"/>
</dbReference>
<dbReference type="CDD" id="cd17693">
    <property type="entry name" value="RUN2_DENND5B"/>
    <property type="match status" value="1"/>
</dbReference>
<dbReference type="FunFam" id="1.20.58.900:FF:000003">
    <property type="entry name" value="DENN domain containing 5A"/>
    <property type="match status" value="1"/>
</dbReference>
<dbReference type="FunFam" id="1.20.58.900:FF:000008">
    <property type="entry name" value="DENN domain containing 5B"/>
    <property type="match status" value="1"/>
</dbReference>
<dbReference type="FunFam" id="2.60.60.20:FF:000001">
    <property type="entry name" value="DENN domain containing 5B"/>
    <property type="match status" value="1"/>
</dbReference>
<dbReference type="FunFam" id="1.20.58.900:FF:000007">
    <property type="entry name" value="DENN domain-containing protein 5B"/>
    <property type="match status" value="1"/>
</dbReference>
<dbReference type="Gene3D" id="1.20.58.900">
    <property type="match status" value="3"/>
</dbReference>
<dbReference type="Gene3D" id="3.30.450.200">
    <property type="match status" value="1"/>
</dbReference>
<dbReference type="Gene3D" id="3.40.50.11500">
    <property type="match status" value="1"/>
</dbReference>
<dbReference type="Gene3D" id="2.60.60.20">
    <property type="entry name" value="PLAT/LH2 domain"/>
    <property type="match status" value="1"/>
</dbReference>
<dbReference type="InterPro" id="IPR001194">
    <property type="entry name" value="cDENN_dom"/>
</dbReference>
<dbReference type="InterPro" id="IPR005112">
    <property type="entry name" value="dDENN_dom"/>
</dbReference>
<dbReference type="InterPro" id="IPR047278">
    <property type="entry name" value="DEN5A/B"/>
</dbReference>
<dbReference type="InterPro" id="IPR043153">
    <property type="entry name" value="DENN_C"/>
</dbReference>
<dbReference type="InterPro" id="IPR001024">
    <property type="entry name" value="PLAT/LH2_dom"/>
</dbReference>
<dbReference type="InterPro" id="IPR036392">
    <property type="entry name" value="PLAT/LH2_dom_sf"/>
</dbReference>
<dbReference type="InterPro" id="IPR047277">
    <property type="entry name" value="PLAT_RAB6IP1"/>
</dbReference>
<dbReference type="InterPro" id="IPR047293">
    <property type="entry name" value="RUN1_DENND5B"/>
</dbReference>
<dbReference type="InterPro" id="IPR047292">
    <property type="entry name" value="RUN2_DENND5B"/>
</dbReference>
<dbReference type="InterPro" id="IPR004012">
    <property type="entry name" value="Run_dom"/>
</dbReference>
<dbReference type="InterPro" id="IPR037213">
    <property type="entry name" value="Run_dom_sf"/>
</dbReference>
<dbReference type="InterPro" id="IPR037516">
    <property type="entry name" value="Tripartite_DENN"/>
</dbReference>
<dbReference type="InterPro" id="IPR005113">
    <property type="entry name" value="uDENN_dom"/>
</dbReference>
<dbReference type="PANTHER" id="PTHR46070:SF3">
    <property type="entry name" value="DENN DOMAIN-CONTAINING PROTEIN 5B"/>
    <property type="match status" value="1"/>
</dbReference>
<dbReference type="PANTHER" id="PTHR46070">
    <property type="entry name" value="PINSTRIPE, ISOFORM A"/>
    <property type="match status" value="1"/>
</dbReference>
<dbReference type="Pfam" id="PF03455">
    <property type="entry name" value="dDENN"/>
    <property type="match status" value="1"/>
</dbReference>
<dbReference type="Pfam" id="PF02141">
    <property type="entry name" value="DENN"/>
    <property type="match status" value="1"/>
</dbReference>
<dbReference type="Pfam" id="PF01477">
    <property type="entry name" value="PLAT"/>
    <property type="match status" value="1"/>
</dbReference>
<dbReference type="Pfam" id="PF02759">
    <property type="entry name" value="RUN"/>
    <property type="match status" value="2"/>
</dbReference>
<dbReference type="Pfam" id="PF03456">
    <property type="entry name" value="uDENN"/>
    <property type="match status" value="1"/>
</dbReference>
<dbReference type="SMART" id="SM00801">
    <property type="entry name" value="dDENN"/>
    <property type="match status" value="1"/>
</dbReference>
<dbReference type="SMART" id="SM00799">
    <property type="entry name" value="DENN"/>
    <property type="match status" value="1"/>
</dbReference>
<dbReference type="SMART" id="SM00593">
    <property type="entry name" value="RUN"/>
    <property type="match status" value="2"/>
</dbReference>
<dbReference type="SMART" id="SM00800">
    <property type="entry name" value="uDENN"/>
    <property type="match status" value="1"/>
</dbReference>
<dbReference type="SUPFAM" id="SSF49723">
    <property type="entry name" value="Lipase/lipooxygenase domain (PLAT/LH2 domain)"/>
    <property type="match status" value="1"/>
</dbReference>
<dbReference type="SUPFAM" id="SSF140741">
    <property type="entry name" value="RUN domain-like"/>
    <property type="match status" value="2"/>
</dbReference>
<dbReference type="PROSITE" id="PS50211">
    <property type="entry name" value="DENN"/>
    <property type="match status" value="1"/>
</dbReference>
<dbReference type="PROSITE" id="PS50095">
    <property type="entry name" value="PLAT"/>
    <property type="match status" value="1"/>
</dbReference>
<dbReference type="PROSITE" id="PS50826">
    <property type="entry name" value="RUN"/>
    <property type="match status" value="2"/>
</dbReference>